<accession>Q46GS7</accession>
<dbReference type="EC" id="2.5.1.61" evidence="1"/>
<dbReference type="EMBL" id="CP000095">
    <property type="protein sequence ID" value="AAZ59316.1"/>
    <property type="molecule type" value="Genomic_DNA"/>
</dbReference>
<dbReference type="RefSeq" id="WP_011294460.1">
    <property type="nucleotide sequence ID" value="NC_007335.2"/>
</dbReference>
<dbReference type="SMR" id="Q46GS7"/>
<dbReference type="STRING" id="59920.PMN2A_1828"/>
<dbReference type="KEGG" id="pmn:PMN2A_1828"/>
<dbReference type="HOGENOM" id="CLU_019704_0_1_3"/>
<dbReference type="OrthoDB" id="9810298at2"/>
<dbReference type="PhylomeDB" id="Q46GS7"/>
<dbReference type="UniPathway" id="UPA00251">
    <property type="reaction ID" value="UER00319"/>
</dbReference>
<dbReference type="UniPathway" id="UPA00668"/>
<dbReference type="Proteomes" id="UP000002535">
    <property type="component" value="Chromosome"/>
</dbReference>
<dbReference type="GO" id="GO:0005737">
    <property type="term" value="C:cytoplasm"/>
    <property type="evidence" value="ECO:0007669"/>
    <property type="project" value="TreeGrafter"/>
</dbReference>
<dbReference type="GO" id="GO:0004418">
    <property type="term" value="F:hydroxymethylbilane synthase activity"/>
    <property type="evidence" value="ECO:0007669"/>
    <property type="project" value="UniProtKB-UniRule"/>
</dbReference>
<dbReference type="GO" id="GO:0015995">
    <property type="term" value="P:chlorophyll biosynthetic process"/>
    <property type="evidence" value="ECO:0007669"/>
    <property type="project" value="UniProtKB-UniRule"/>
</dbReference>
<dbReference type="GO" id="GO:0006782">
    <property type="term" value="P:protoporphyrinogen IX biosynthetic process"/>
    <property type="evidence" value="ECO:0007669"/>
    <property type="project" value="UniProtKB-UniRule"/>
</dbReference>
<dbReference type="CDD" id="cd13645">
    <property type="entry name" value="PBP2_HuPBGD_like"/>
    <property type="match status" value="1"/>
</dbReference>
<dbReference type="FunFam" id="3.30.160.40:FF:000002">
    <property type="entry name" value="Porphobilinogen deaminase"/>
    <property type="match status" value="1"/>
</dbReference>
<dbReference type="FunFam" id="3.40.190.10:FF:000004">
    <property type="entry name" value="Porphobilinogen deaminase"/>
    <property type="match status" value="1"/>
</dbReference>
<dbReference type="FunFam" id="3.40.190.10:FF:000005">
    <property type="entry name" value="Porphobilinogen deaminase"/>
    <property type="match status" value="1"/>
</dbReference>
<dbReference type="Gene3D" id="3.40.190.10">
    <property type="entry name" value="Periplasmic binding protein-like II"/>
    <property type="match status" value="2"/>
</dbReference>
<dbReference type="Gene3D" id="3.30.160.40">
    <property type="entry name" value="Porphobilinogen deaminase, C-terminal domain"/>
    <property type="match status" value="1"/>
</dbReference>
<dbReference type="HAMAP" id="MF_00260">
    <property type="entry name" value="Porphobil_deam"/>
    <property type="match status" value="1"/>
</dbReference>
<dbReference type="InterPro" id="IPR000860">
    <property type="entry name" value="HemC"/>
</dbReference>
<dbReference type="InterPro" id="IPR022419">
    <property type="entry name" value="Porphobilin_deaminase_cofac_BS"/>
</dbReference>
<dbReference type="InterPro" id="IPR022417">
    <property type="entry name" value="Porphobilin_deaminase_N"/>
</dbReference>
<dbReference type="InterPro" id="IPR022418">
    <property type="entry name" value="Porphobilinogen_deaminase_C"/>
</dbReference>
<dbReference type="InterPro" id="IPR036803">
    <property type="entry name" value="Porphobilinogen_deaminase_C_sf"/>
</dbReference>
<dbReference type="NCBIfam" id="TIGR00212">
    <property type="entry name" value="hemC"/>
    <property type="match status" value="1"/>
</dbReference>
<dbReference type="PANTHER" id="PTHR11557">
    <property type="entry name" value="PORPHOBILINOGEN DEAMINASE"/>
    <property type="match status" value="1"/>
</dbReference>
<dbReference type="PANTHER" id="PTHR11557:SF0">
    <property type="entry name" value="PORPHOBILINOGEN DEAMINASE"/>
    <property type="match status" value="1"/>
</dbReference>
<dbReference type="Pfam" id="PF01379">
    <property type="entry name" value="Porphobil_deam"/>
    <property type="match status" value="1"/>
</dbReference>
<dbReference type="Pfam" id="PF03900">
    <property type="entry name" value="Porphobil_deamC"/>
    <property type="match status" value="1"/>
</dbReference>
<dbReference type="PIRSF" id="PIRSF001438">
    <property type="entry name" value="4pyrrol_synth_OHMeBilane_synth"/>
    <property type="match status" value="1"/>
</dbReference>
<dbReference type="PRINTS" id="PR00151">
    <property type="entry name" value="PORPHBDMNASE"/>
</dbReference>
<dbReference type="SUPFAM" id="SSF53850">
    <property type="entry name" value="Periplasmic binding protein-like II"/>
    <property type="match status" value="1"/>
</dbReference>
<dbReference type="SUPFAM" id="SSF54782">
    <property type="entry name" value="Porphobilinogen deaminase (hydroxymethylbilane synthase), C-terminal domain"/>
    <property type="match status" value="1"/>
</dbReference>
<dbReference type="PROSITE" id="PS00533">
    <property type="entry name" value="PORPHOBILINOGEN_DEAM"/>
    <property type="match status" value="1"/>
</dbReference>
<protein>
    <recommendedName>
        <fullName evidence="1">Porphobilinogen deaminase</fullName>
        <shortName evidence="1">PBG</shortName>
        <ecNumber evidence="1">2.5.1.61</ecNumber>
    </recommendedName>
    <alternativeName>
        <fullName evidence="1">Hydroxymethylbilane synthase</fullName>
        <shortName evidence="1">HMBS</shortName>
    </alternativeName>
    <alternativeName>
        <fullName evidence="1">Pre-uroporphyrinogen synthase</fullName>
    </alternativeName>
</protein>
<comment type="function">
    <text evidence="1">Tetrapolymerization of the monopyrrole PBG into the hydroxymethylbilane pre-uroporphyrinogen in several discrete steps.</text>
</comment>
<comment type="catalytic activity">
    <reaction evidence="1">
        <text>4 porphobilinogen + H2O = hydroxymethylbilane + 4 NH4(+)</text>
        <dbReference type="Rhea" id="RHEA:13185"/>
        <dbReference type="ChEBI" id="CHEBI:15377"/>
        <dbReference type="ChEBI" id="CHEBI:28938"/>
        <dbReference type="ChEBI" id="CHEBI:57845"/>
        <dbReference type="ChEBI" id="CHEBI:58126"/>
        <dbReference type="EC" id="2.5.1.61"/>
    </reaction>
</comment>
<comment type="cofactor">
    <cofactor evidence="1">
        <name>dipyrromethane</name>
        <dbReference type="ChEBI" id="CHEBI:60342"/>
    </cofactor>
    <text evidence="1">Binds 1 dipyrromethane group covalently.</text>
</comment>
<comment type="pathway">
    <text evidence="1">Porphyrin-containing compound metabolism; protoporphyrin-IX biosynthesis; coproporphyrinogen-III from 5-aminolevulinate: step 2/4.</text>
</comment>
<comment type="pathway">
    <text evidence="1">Porphyrin-containing compound metabolism; chlorophyll biosynthesis.</text>
</comment>
<comment type="subunit">
    <text evidence="1">Monomer.</text>
</comment>
<comment type="miscellaneous">
    <text evidence="1">The porphobilinogen subunits are added to the dipyrromethane group.</text>
</comment>
<comment type="similarity">
    <text evidence="1">Belongs to the HMBS family.</text>
</comment>
<keyword id="KW-0149">Chlorophyll biosynthesis</keyword>
<keyword id="KW-0627">Porphyrin biosynthesis</keyword>
<keyword id="KW-1185">Reference proteome</keyword>
<keyword id="KW-0808">Transferase</keyword>
<evidence type="ECO:0000255" key="1">
    <source>
        <dbReference type="HAMAP-Rule" id="MF_00260"/>
    </source>
</evidence>
<gene>
    <name evidence="1" type="primary">hemC</name>
    <name type="ordered locus">PMN2A_1828</name>
</gene>
<name>HEM3_PROMT</name>
<proteinExistence type="inferred from homology"/>
<reference key="1">
    <citation type="journal article" date="2007" name="PLoS Genet.">
        <title>Patterns and implications of gene gain and loss in the evolution of Prochlorococcus.</title>
        <authorList>
            <person name="Kettler G.C."/>
            <person name="Martiny A.C."/>
            <person name="Huang K."/>
            <person name="Zucker J."/>
            <person name="Coleman M.L."/>
            <person name="Rodrigue S."/>
            <person name="Chen F."/>
            <person name="Lapidus A."/>
            <person name="Ferriera S."/>
            <person name="Johnson J."/>
            <person name="Steglich C."/>
            <person name="Church G.M."/>
            <person name="Richardson P."/>
            <person name="Chisholm S.W."/>
        </authorList>
    </citation>
    <scope>NUCLEOTIDE SEQUENCE [LARGE SCALE GENOMIC DNA]</scope>
    <source>
        <strain>NATL2A</strain>
    </source>
</reference>
<sequence length="315" mass="34669">MTLDQLRIASRRSQLAMVQTNWVRDELQREHPDLVITIEAMATQGDKILDVALAKIGDKGLFTKELEAQMLLGHAEIAVHSLKDLPTNLPDGLILGCITKREDPSDALVVNEKNQIHKLETLPEGSVVGTSSLRRLAQLRYHYPHLVFKDVRGNVITRLEKLDSGEYDCLILAAAGLQRLGFANRIHQLIPTDISLHAVGQGALGIECVSGQQKVLDILKTLEHESTSKRCLAERSFLRELEGGCQVPIGVRTEINNNELILEGMVASLDGKRLIRDIKKGSVSSAEEIGIDLANELKGRGAGEILEEIFKSARA</sequence>
<feature type="chain" id="PRO_0000304264" description="Porphobilinogen deaminase">
    <location>
        <begin position="1"/>
        <end position="315"/>
    </location>
</feature>
<feature type="modified residue" description="S-(dipyrrolylmethanemethyl)cysteine" evidence="1">
    <location>
        <position position="245"/>
    </location>
</feature>
<organism>
    <name type="scientific">Prochlorococcus marinus (strain NATL2A)</name>
    <dbReference type="NCBI Taxonomy" id="59920"/>
    <lineage>
        <taxon>Bacteria</taxon>
        <taxon>Bacillati</taxon>
        <taxon>Cyanobacteriota</taxon>
        <taxon>Cyanophyceae</taxon>
        <taxon>Synechococcales</taxon>
        <taxon>Prochlorococcaceae</taxon>
        <taxon>Prochlorococcus</taxon>
    </lineage>
</organism>